<evidence type="ECO:0000255" key="1"/>
<evidence type="ECO:0000305" key="2"/>
<gene>
    <name type="ordered locus">jhp_1057</name>
</gene>
<organism>
    <name type="scientific">Helicobacter pylori (strain J99 / ATCC 700824)</name>
    <name type="common">Campylobacter pylori J99</name>
    <dbReference type="NCBI Taxonomy" id="85963"/>
    <lineage>
        <taxon>Bacteria</taxon>
        <taxon>Pseudomonadati</taxon>
        <taxon>Campylobacterota</taxon>
        <taxon>Epsilonproteobacteria</taxon>
        <taxon>Campylobacterales</taxon>
        <taxon>Helicobacteraceae</taxon>
        <taxon>Helicobacter</taxon>
    </lineage>
</organism>
<feature type="chain" id="PRO_0000129137" description="Putative biopolymer transport protein ExbD-like 1">
    <location>
        <begin position="1"/>
        <end position="133"/>
    </location>
</feature>
<feature type="topological domain" description="Cytoplasmic" evidence="1">
    <location>
        <begin position="1"/>
        <end position="15"/>
    </location>
</feature>
<feature type="transmembrane region" description="Helical" evidence="1">
    <location>
        <begin position="16"/>
        <end position="32"/>
    </location>
</feature>
<feature type="topological domain" description="Periplasmic" evidence="1">
    <location>
        <begin position="33"/>
        <end position="133"/>
    </location>
</feature>
<protein>
    <recommendedName>
        <fullName>Putative biopolymer transport protein ExbD-like 1</fullName>
    </recommendedName>
</protein>
<keyword id="KW-0997">Cell inner membrane</keyword>
<keyword id="KW-1003">Cell membrane</keyword>
<keyword id="KW-0472">Membrane</keyword>
<keyword id="KW-0653">Protein transport</keyword>
<keyword id="KW-0812">Transmembrane</keyword>
<keyword id="KW-1133">Transmembrane helix</keyword>
<keyword id="KW-0813">Transport</keyword>
<accession>Q9ZK84</accession>
<comment type="subcellular location">
    <subcellularLocation>
        <location evidence="2">Cell inner membrane</location>
        <topology evidence="2">Single-pass type II membrane protein</topology>
    </subcellularLocation>
</comment>
<comment type="similarity">
    <text evidence="2">Belongs to the ExbD/TolR family.</text>
</comment>
<name>EXDL1_HELPJ</name>
<sequence>MNYDNYWDEDKPELNITPLVDVMLVLLAILMVTTPTLTYKEEIALPSGSKTARATQDKVIEIRMDKDAKIYIDSQTYEYNSFPDTFNLLSKKYDKDTRVSIRADKRLTYDKVIYLLKTIKEAGFLKVSLITSP</sequence>
<dbReference type="EMBL" id="AE001439">
    <property type="protein sequence ID" value="AAD06636.1"/>
    <property type="molecule type" value="Genomic_DNA"/>
</dbReference>
<dbReference type="PIR" id="A71855">
    <property type="entry name" value="A71855"/>
</dbReference>
<dbReference type="RefSeq" id="WP_001105112.1">
    <property type="nucleotide sequence ID" value="NZ_CP011330.1"/>
</dbReference>
<dbReference type="SMR" id="Q9ZK84"/>
<dbReference type="KEGG" id="hpj:jhp_1057"/>
<dbReference type="PATRIC" id="fig|85963.30.peg.1531"/>
<dbReference type="eggNOG" id="COG0848">
    <property type="taxonomic scope" value="Bacteria"/>
</dbReference>
<dbReference type="Proteomes" id="UP000000804">
    <property type="component" value="Chromosome"/>
</dbReference>
<dbReference type="GO" id="GO:0005886">
    <property type="term" value="C:plasma membrane"/>
    <property type="evidence" value="ECO:0007669"/>
    <property type="project" value="UniProtKB-SubCell"/>
</dbReference>
<dbReference type="GO" id="GO:0022857">
    <property type="term" value="F:transmembrane transporter activity"/>
    <property type="evidence" value="ECO:0007669"/>
    <property type="project" value="InterPro"/>
</dbReference>
<dbReference type="GO" id="GO:0015031">
    <property type="term" value="P:protein transport"/>
    <property type="evidence" value="ECO:0007669"/>
    <property type="project" value="UniProtKB-KW"/>
</dbReference>
<dbReference type="Gene3D" id="3.30.420.270">
    <property type="match status" value="1"/>
</dbReference>
<dbReference type="InterPro" id="IPR003400">
    <property type="entry name" value="ExbD"/>
</dbReference>
<dbReference type="PANTHER" id="PTHR30558:SF12">
    <property type="entry name" value="BIOPOLYMER TRANSPORT PROTEIN EXBD"/>
    <property type="match status" value="1"/>
</dbReference>
<dbReference type="PANTHER" id="PTHR30558">
    <property type="entry name" value="EXBD MEMBRANE COMPONENT OF PMF-DRIVEN MACROMOLECULE IMPORT SYSTEM"/>
    <property type="match status" value="1"/>
</dbReference>
<dbReference type="Pfam" id="PF02472">
    <property type="entry name" value="ExbD"/>
    <property type="match status" value="1"/>
</dbReference>
<reference key="1">
    <citation type="journal article" date="1999" name="Nature">
        <title>Genomic sequence comparison of two unrelated isolates of the human gastric pathogen Helicobacter pylori.</title>
        <authorList>
            <person name="Alm R.A."/>
            <person name="Ling L.-S.L."/>
            <person name="Moir D.T."/>
            <person name="King B.L."/>
            <person name="Brown E.D."/>
            <person name="Doig P.C."/>
            <person name="Smith D.R."/>
            <person name="Noonan B."/>
            <person name="Guild B.C."/>
            <person name="deJonge B.L."/>
            <person name="Carmel G."/>
            <person name="Tummino P.J."/>
            <person name="Caruso A."/>
            <person name="Uria-Nickelsen M."/>
            <person name="Mills D.M."/>
            <person name="Ives C."/>
            <person name="Gibson R."/>
            <person name="Merberg D."/>
            <person name="Mills S.D."/>
            <person name="Jiang Q."/>
            <person name="Taylor D.E."/>
            <person name="Vovis G.F."/>
            <person name="Trust T.J."/>
        </authorList>
    </citation>
    <scope>NUCLEOTIDE SEQUENCE [LARGE SCALE GENOMIC DNA]</scope>
    <source>
        <strain>J99 / ATCC 700824</strain>
    </source>
</reference>
<proteinExistence type="inferred from homology"/>